<comment type="catalytic activity">
    <reaction evidence="1">
        <text>tRNA(His) + L-histidine + ATP = L-histidyl-tRNA(His) + AMP + diphosphate + H(+)</text>
        <dbReference type="Rhea" id="RHEA:17313"/>
        <dbReference type="Rhea" id="RHEA-COMP:9665"/>
        <dbReference type="Rhea" id="RHEA-COMP:9689"/>
        <dbReference type="ChEBI" id="CHEBI:15378"/>
        <dbReference type="ChEBI" id="CHEBI:30616"/>
        <dbReference type="ChEBI" id="CHEBI:33019"/>
        <dbReference type="ChEBI" id="CHEBI:57595"/>
        <dbReference type="ChEBI" id="CHEBI:78442"/>
        <dbReference type="ChEBI" id="CHEBI:78527"/>
        <dbReference type="ChEBI" id="CHEBI:456215"/>
        <dbReference type="EC" id="6.1.1.21"/>
    </reaction>
</comment>
<comment type="subunit">
    <text evidence="1">Homodimer.</text>
</comment>
<comment type="subcellular location">
    <subcellularLocation>
        <location evidence="1">Cytoplasm</location>
    </subcellularLocation>
</comment>
<comment type="similarity">
    <text evidence="1">Belongs to the class-II aminoacyl-tRNA synthetase family.</text>
</comment>
<proteinExistence type="inferred from homology"/>
<sequence length="422" mass="45361">MTELSSFKAPKGVPDYLPPASAEFVAVRNGLLAAARRAGYGDIELPIFEDTALFARGVGESTDVVSKEMYTFADRGDRSVTLRPEGTAGVMRAVIEHGLDRGQLPVKLCYSGPFFRYERPQAGRYRQLQQVGVEAIGVDDPALDAEVIAVADAGFRSLGLDGFRLDITSLGDDSCRPQYRELLQEFLFKLDLDEETRRRAEINPLRVLDDKRPHMKEMTADAPVMLDHLSDAAKQHFDTVLAHLDALSVPYVINPRMVRGLDYYTKTTFEFVHDGLGAQSGIGGGGRYDGLMHQLGGRDLSGIGFGLGVDRTLLALRAEGKTAGETARVDVYAVPLGGDAKVRLAVLAAQLRAAGVRVDVAYGDRSLKGAMKGADRSGASIALVAGDRDLEAGTVGMKSMATGEQVDVAVEGVVAEVLSRLS</sequence>
<name>SYH_MYCVP</name>
<protein>
    <recommendedName>
        <fullName evidence="1">Histidine--tRNA ligase</fullName>
        <ecNumber evidence="1">6.1.1.21</ecNumber>
    </recommendedName>
    <alternativeName>
        <fullName evidence="1">Histidyl-tRNA synthetase</fullName>
        <shortName evidence="1">HisRS</shortName>
    </alternativeName>
</protein>
<gene>
    <name evidence="1" type="primary">hisS</name>
    <name type="ordered locus">Mvan_2590</name>
</gene>
<dbReference type="EC" id="6.1.1.21" evidence="1"/>
<dbReference type="EMBL" id="CP000511">
    <property type="protein sequence ID" value="ABM13398.1"/>
    <property type="molecule type" value="Genomic_DNA"/>
</dbReference>
<dbReference type="RefSeq" id="WP_011779807.1">
    <property type="nucleotide sequence ID" value="NC_008726.1"/>
</dbReference>
<dbReference type="SMR" id="A1T898"/>
<dbReference type="STRING" id="350058.Mvan_2590"/>
<dbReference type="KEGG" id="mva:Mvan_2590"/>
<dbReference type="eggNOG" id="COG0124">
    <property type="taxonomic scope" value="Bacteria"/>
</dbReference>
<dbReference type="HOGENOM" id="CLU_025113_1_1_11"/>
<dbReference type="Proteomes" id="UP000009159">
    <property type="component" value="Chromosome"/>
</dbReference>
<dbReference type="GO" id="GO:0005737">
    <property type="term" value="C:cytoplasm"/>
    <property type="evidence" value="ECO:0007669"/>
    <property type="project" value="UniProtKB-SubCell"/>
</dbReference>
<dbReference type="GO" id="GO:0005524">
    <property type="term" value="F:ATP binding"/>
    <property type="evidence" value="ECO:0007669"/>
    <property type="project" value="UniProtKB-UniRule"/>
</dbReference>
<dbReference type="GO" id="GO:0004821">
    <property type="term" value="F:histidine-tRNA ligase activity"/>
    <property type="evidence" value="ECO:0007669"/>
    <property type="project" value="UniProtKB-UniRule"/>
</dbReference>
<dbReference type="GO" id="GO:0006427">
    <property type="term" value="P:histidyl-tRNA aminoacylation"/>
    <property type="evidence" value="ECO:0007669"/>
    <property type="project" value="UniProtKB-UniRule"/>
</dbReference>
<dbReference type="CDD" id="cd00773">
    <property type="entry name" value="HisRS-like_core"/>
    <property type="match status" value="1"/>
</dbReference>
<dbReference type="CDD" id="cd00859">
    <property type="entry name" value="HisRS_anticodon"/>
    <property type="match status" value="1"/>
</dbReference>
<dbReference type="FunFam" id="3.30.930.10:FF:000005">
    <property type="entry name" value="Histidine--tRNA ligase"/>
    <property type="match status" value="1"/>
</dbReference>
<dbReference type="Gene3D" id="3.40.50.800">
    <property type="entry name" value="Anticodon-binding domain"/>
    <property type="match status" value="1"/>
</dbReference>
<dbReference type="Gene3D" id="3.30.930.10">
    <property type="entry name" value="Bira Bifunctional Protein, Domain 2"/>
    <property type="match status" value="1"/>
</dbReference>
<dbReference type="HAMAP" id="MF_00127">
    <property type="entry name" value="His_tRNA_synth"/>
    <property type="match status" value="1"/>
</dbReference>
<dbReference type="InterPro" id="IPR006195">
    <property type="entry name" value="aa-tRNA-synth_II"/>
</dbReference>
<dbReference type="InterPro" id="IPR045864">
    <property type="entry name" value="aa-tRNA-synth_II/BPL/LPL"/>
</dbReference>
<dbReference type="InterPro" id="IPR004154">
    <property type="entry name" value="Anticodon-bd"/>
</dbReference>
<dbReference type="InterPro" id="IPR036621">
    <property type="entry name" value="Anticodon-bd_dom_sf"/>
</dbReference>
<dbReference type="InterPro" id="IPR015807">
    <property type="entry name" value="His-tRNA-ligase"/>
</dbReference>
<dbReference type="InterPro" id="IPR041715">
    <property type="entry name" value="HisRS-like_core"/>
</dbReference>
<dbReference type="InterPro" id="IPR004516">
    <property type="entry name" value="HisRS/HisZ"/>
</dbReference>
<dbReference type="InterPro" id="IPR033656">
    <property type="entry name" value="HisRS_anticodon"/>
</dbReference>
<dbReference type="NCBIfam" id="TIGR00442">
    <property type="entry name" value="hisS"/>
    <property type="match status" value="1"/>
</dbReference>
<dbReference type="PANTHER" id="PTHR43707:SF1">
    <property type="entry name" value="HISTIDINE--TRNA LIGASE, MITOCHONDRIAL-RELATED"/>
    <property type="match status" value="1"/>
</dbReference>
<dbReference type="PANTHER" id="PTHR43707">
    <property type="entry name" value="HISTIDYL-TRNA SYNTHETASE"/>
    <property type="match status" value="1"/>
</dbReference>
<dbReference type="Pfam" id="PF03129">
    <property type="entry name" value="HGTP_anticodon"/>
    <property type="match status" value="1"/>
</dbReference>
<dbReference type="Pfam" id="PF13393">
    <property type="entry name" value="tRNA-synt_His"/>
    <property type="match status" value="1"/>
</dbReference>
<dbReference type="PIRSF" id="PIRSF001549">
    <property type="entry name" value="His-tRNA_synth"/>
    <property type="match status" value="1"/>
</dbReference>
<dbReference type="SUPFAM" id="SSF52954">
    <property type="entry name" value="Class II aaRS ABD-related"/>
    <property type="match status" value="1"/>
</dbReference>
<dbReference type="SUPFAM" id="SSF55681">
    <property type="entry name" value="Class II aaRS and biotin synthetases"/>
    <property type="match status" value="1"/>
</dbReference>
<dbReference type="PROSITE" id="PS50862">
    <property type="entry name" value="AA_TRNA_LIGASE_II"/>
    <property type="match status" value="1"/>
</dbReference>
<evidence type="ECO:0000255" key="1">
    <source>
        <dbReference type="HAMAP-Rule" id="MF_00127"/>
    </source>
</evidence>
<feature type="chain" id="PRO_1000016399" description="Histidine--tRNA ligase">
    <location>
        <begin position="1"/>
        <end position="422"/>
    </location>
</feature>
<organism>
    <name type="scientific">Mycolicibacterium vanbaalenii (strain DSM 7251 / JCM 13017 / BCRC 16820 / KCTC 9966 / NRRL B-24157 / PYR-1)</name>
    <name type="common">Mycobacterium vanbaalenii</name>
    <dbReference type="NCBI Taxonomy" id="350058"/>
    <lineage>
        <taxon>Bacteria</taxon>
        <taxon>Bacillati</taxon>
        <taxon>Actinomycetota</taxon>
        <taxon>Actinomycetes</taxon>
        <taxon>Mycobacteriales</taxon>
        <taxon>Mycobacteriaceae</taxon>
        <taxon>Mycolicibacterium</taxon>
    </lineage>
</organism>
<keyword id="KW-0030">Aminoacyl-tRNA synthetase</keyword>
<keyword id="KW-0067">ATP-binding</keyword>
<keyword id="KW-0963">Cytoplasm</keyword>
<keyword id="KW-0436">Ligase</keyword>
<keyword id="KW-0547">Nucleotide-binding</keyword>
<keyword id="KW-0648">Protein biosynthesis</keyword>
<reference key="1">
    <citation type="submission" date="2006-12" db="EMBL/GenBank/DDBJ databases">
        <title>Complete sequence of Mycobacterium vanbaalenii PYR-1.</title>
        <authorList>
            <consortium name="US DOE Joint Genome Institute"/>
            <person name="Copeland A."/>
            <person name="Lucas S."/>
            <person name="Lapidus A."/>
            <person name="Barry K."/>
            <person name="Detter J.C."/>
            <person name="Glavina del Rio T."/>
            <person name="Hammon N."/>
            <person name="Israni S."/>
            <person name="Dalin E."/>
            <person name="Tice H."/>
            <person name="Pitluck S."/>
            <person name="Singan V."/>
            <person name="Schmutz J."/>
            <person name="Larimer F."/>
            <person name="Land M."/>
            <person name="Hauser L."/>
            <person name="Kyrpides N."/>
            <person name="Anderson I.J."/>
            <person name="Miller C."/>
            <person name="Richardson P."/>
        </authorList>
    </citation>
    <scope>NUCLEOTIDE SEQUENCE [LARGE SCALE GENOMIC DNA]</scope>
    <source>
        <strain>DSM 7251 / JCM 13017 / BCRC 16820 / KCTC 9966 / NRRL B-24157 / PYR-1</strain>
    </source>
</reference>
<accession>A1T898</accession>